<comment type="function">
    <text evidence="1 4">Removes N-terminal dipeptides sequentially from polypeptides (By similarity). Essential for control of distal tip cell migration.</text>
</comment>
<comment type="subcellular location">
    <subcellularLocation>
        <location evidence="1">Cell membrane</location>
        <topology evidence="1">Single-pass type II membrane protein</topology>
    </subcellularLocation>
</comment>
<comment type="alternative products">
    <event type="alternative splicing"/>
    <isoform>
        <id>Q7JKY3-1</id>
        <name>b</name>
        <sequence type="displayed"/>
    </isoform>
    <isoform>
        <id>Q7JKY3-2</id>
        <name>a</name>
        <sequence type="described" ref="VSP_020298"/>
    </isoform>
</comment>
<comment type="similarity">
    <text evidence="5">Belongs to the peptidase S9B family. DPPIV subfamily.</text>
</comment>
<organism>
    <name type="scientific">Caenorhabditis elegans</name>
    <dbReference type="NCBI Taxonomy" id="6239"/>
    <lineage>
        <taxon>Eukaryota</taxon>
        <taxon>Metazoa</taxon>
        <taxon>Ecdysozoa</taxon>
        <taxon>Nematoda</taxon>
        <taxon>Chromadorea</taxon>
        <taxon>Rhabditida</taxon>
        <taxon>Rhabditina</taxon>
        <taxon>Rhabditomorpha</taxon>
        <taxon>Rhabditoidea</taxon>
        <taxon>Rhabditidae</taxon>
        <taxon>Peloderinae</taxon>
        <taxon>Caenorhabditis</taxon>
    </lineage>
</organism>
<keyword id="KW-0025">Alternative splicing</keyword>
<keyword id="KW-0031">Aminopeptidase</keyword>
<keyword id="KW-1003">Cell membrane</keyword>
<keyword id="KW-1015">Disulfide bond</keyword>
<keyword id="KW-0325">Glycoprotein</keyword>
<keyword id="KW-0378">Hydrolase</keyword>
<keyword id="KW-0472">Membrane</keyword>
<keyword id="KW-0645">Protease</keyword>
<keyword id="KW-1185">Reference proteome</keyword>
<keyword id="KW-0720">Serine protease</keyword>
<keyword id="KW-0735">Signal-anchor</keyword>
<keyword id="KW-0812">Transmembrane</keyword>
<keyword id="KW-1133">Transmembrane helix</keyword>
<accession>Q7JKY3</accession>
<accession>O18119</accession>
<protein>
    <recommendedName>
        <fullName>Dipeptidyl peptidase family member 1</fullName>
        <ecNumber>3.4.14.-</ecNumber>
    </recommendedName>
</protein>
<proteinExistence type="evidence at protein level"/>
<dbReference type="EC" id="3.4.14.-"/>
<dbReference type="EMBL" id="Z81129">
    <property type="protein sequence ID" value="CAB03411.1"/>
    <property type="molecule type" value="Genomic_DNA"/>
</dbReference>
<dbReference type="EMBL" id="Z81129">
    <property type="protein sequence ID" value="CAB03412.1"/>
    <property type="molecule type" value="Genomic_DNA"/>
</dbReference>
<dbReference type="PIR" id="T25173">
    <property type="entry name" value="T25173"/>
</dbReference>
<dbReference type="PIR" id="T25174">
    <property type="entry name" value="T25174"/>
</dbReference>
<dbReference type="RefSeq" id="NP_506850.1">
    <molecule id="Q7JKY3-1"/>
    <property type="nucleotide sequence ID" value="NM_074449.6"/>
</dbReference>
<dbReference type="RefSeq" id="NP_506851.1">
    <molecule id="Q7JKY3-2"/>
    <property type="nucleotide sequence ID" value="NM_074450.7"/>
</dbReference>
<dbReference type="SMR" id="Q7JKY3"/>
<dbReference type="FunCoup" id="Q7JKY3">
    <property type="interactions" value="493"/>
</dbReference>
<dbReference type="STRING" id="6239.T23F1.7b.1"/>
<dbReference type="ESTHER" id="caeel-T23F1.7">
    <property type="family name" value="DPP4N_Peptidase_S9"/>
</dbReference>
<dbReference type="MEROPS" id="S09.A76"/>
<dbReference type="GlyCosmos" id="Q7JKY3">
    <property type="glycosylation" value="6 sites, No reported glycans"/>
</dbReference>
<dbReference type="iPTMnet" id="Q7JKY3"/>
<dbReference type="PaxDb" id="6239-T23F1.7b"/>
<dbReference type="EnsemblMetazoa" id="T23F1.7a.1">
    <molecule id="Q7JKY3-2"/>
    <property type="protein sequence ID" value="T23F1.7a.1"/>
    <property type="gene ID" value="WBGene00001054"/>
</dbReference>
<dbReference type="EnsemblMetazoa" id="T23F1.7b.1">
    <molecule id="Q7JKY3-1"/>
    <property type="protein sequence ID" value="T23F1.7b.1"/>
    <property type="gene ID" value="WBGene00001054"/>
</dbReference>
<dbReference type="GeneID" id="180042"/>
<dbReference type="KEGG" id="cel:CELE_T23F1.7"/>
<dbReference type="UCSC" id="T23F1.7a">
    <molecule id="Q7JKY3-1"/>
    <property type="organism name" value="c. elegans"/>
</dbReference>
<dbReference type="AGR" id="WB:WBGene00001054"/>
<dbReference type="CTD" id="180042"/>
<dbReference type="WormBase" id="T23F1.7a">
    <molecule id="Q7JKY3-2"/>
    <property type="protein sequence ID" value="CE21195"/>
    <property type="gene ID" value="WBGene00001054"/>
    <property type="gene designation" value="dpf-1"/>
</dbReference>
<dbReference type="WormBase" id="T23F1.7b">
    <molecule id="Q7JKY3-1"/>
    <property type="protein sequence ID" value="CE21196"/>
    <property type="gene ID" value="WBGene00001054"/>
    <property type="gene designation" value="dpf-1"/>
</dbReference>
<dbReference type="eggNOG" id="KOG2100">
    <property type="taxonomic scope" value="Eukaryota"/>
</dbReference>
<dbReference type="GeneTree" id="ENSGT00940000161291"/>
<dbReference type="InParanoid" id="Q7JKY3"/>
<dbReference type="OMA" id="MRTPQEN"/>
<dbReference type="OrthoDB" id="16520at2759"/>
<dbReference type="PhylomeDB" id="Q7JKY3"/>
<dbReference type="PRO" id="PR:Q7JKY3"/>
<dbReference type="Proteomes" id="UP000001940">
    <property type="component" value="Chromosome V"/>
</dbReference>
<dbReference type="Bgee" id="WBGene00001054">
    <property type="expression patterns" value="Expressed in larva and 3 other cell types or tissues"/>
</dbReference>
<dbReference type="ExpressionAtlas" id="Q7JKY3">
    <property type="expression patterns" value="baseline and differential"/>
</dbReference>
<dbReference type="GO" id="GO:0005886">
    <property type="term" value="C:plasma membrane"/>
    <property type="evidence" value="ECO:0000318"/>
    <property type="project" value="GO_Central"/>
</dbReference>
<dbReference type="GO" id="GO:0004177">
    <property type="term" value="F:aminopeptidase activity"/>
    <property type="evidence" value="ECO:0007669"/>
    <property type="project" value="UniProtKB-KW"/>
</dbReference>
<dbReference type="GO" id="GO:0008239">
    <property type="term" value="F:dipeptidyl-peptidase activity"/>
    <property type="evidence" value="ECO:0000318"/>
    <property type="project" value="GO_Central"/>
</dbReference>
<dbReference type="GO" id="GO:0008236">
    <property type="term" value="F:serine-type peptidase activity"/>
    <property type="evidence" value="ECO:0007669"/>
    <property type="project" value="UniProtKB-KW"/>
</dbReference>
<dbReference type="GO" id="GO:0006508">
    <property type="term" value="P:proteolysis"/>
    <property type="evidence" value="ECO:0000318"/>
    <property type="project" value="GO_Central"/>
</dbReference>
<dbReference type="FunFam" id="3.40.50.1820:FF:000003">
    <property type="entry name" value="Dipeptidyl peptidase 4"/>
    <property type="match status" value="1"/>
</dbReference>
<dbReference type="Gene3D" id="3.40.50.1820">
    <property type="entry name" value="alpha/beta hydrolase"/>
    <property type="match status" value="1"/>
</dbReference>
<dbReference type="Gene3D" id="2.140.10.30">
    <property type="entry name" value="Dipeptidylpeptidase IV, N-terminal domain"/>
    <property type="match status" value="1"/>
</dbReference>
<dbReference type="InterPro" id="IPR029058">
    <property type="entry name" value="AB_hydrolase_fold"/>
</dbReference>
<dbReference type="InterPro" id="IPR001375">
    <property type="entry name" value="Peptidase_S9_cat"/>
</dbReference>
<dbReference type="InterPro" id="IPR002469">
    <property type="entry name" value="Peptidase_S9B_N"/>
</dbReference>
<dbReference type="InterPro" id="IPR050278">
    <property type="entry name" value="Serine_Prot_S9B/DPPIV"/>
</dbReference>
<dbReference type="PANTHER" id="PTHR11731:SF200">
    <property type="entry name" value="DIPEPTIDYL PEPTIDASE 10, ISOFORM B"/>
    <property type="match status" value="1"/>
</dbReference>
<dbReference type="PANTHER" id="PTHR11731">
    <property type="entry name" value="PROTEASE FAMILY S9B,C DIPEPTIDYL-PEPTIDASE IV-RELATED"/>
    <property type="match status" value="1"/>
</dbReference>
<dbReference type="Pfam" id="PF00930">
    <property type="entry name" value="DPPIV_N"/>
    <property type="match status" value="1"/>
</dbReference>
<dbReference type="Pfam" id="PF00326">
    <property type="entry name" value="Peptidase_S9"/>
    <property type="match status" value="1"/>
</dbReference>
<dbReference type="SUPFAM" id="SSF53474">
    <property type="entry name" value="alpha/beta-Hydrolases"/>
    <property type="match status" value="1"/>
</dbReference>
<dbReference type="SUPFAM" id="SSF82171">
    <property type="entry name" value="DPP6 N-terminal domain-like"/>
    <property type="match status" value="1"/>
</dbReference>
<feature type="chain" id="PRO_0000248534" description="Dipeptidyl peptidase family member 1">
    <location>
        <begin position="1"/>
        <end position="799"/>
    </location>
</feature>
<feature type="topological domain" description="Cytoplasmic" evidence="2">
    <location>
        <begin position="1"/>
        <end position="31"/>
    </location>
</feature>
<feature type="transmembrane region" description="Helical; Signal-anchor for type II membrane protein" evidence="2">
    <location>
        <begin position="32"/>
        <end position="52"/>
    </location>
</feature>
<feature type="topological domain" description="Lumenal" evidence="2">
    <location>
        <begin position="53"/>
        <end position="799"/>
    </location>
</feature>
<feature type="active site" description="Charge relay system" evidence="1">
    <location>
        <position position="669"/>
    </location>
</feature>
<feature type="active site" description="Charge relay system" evidence="1">
    <location>
        <position position="742"/>
    </location>
</feature>
<feature type="active site" description="Charge relay system" evidence="1">
    <location>
        <position position="774"/>
    </location>
</feature>
<feature type="glycosylation site" description="N-linked (GlcNAc...) asparagine" evidence="2">
    <location>
        <position position="64"/>
    </location>
</feature>
<feature type="glycosylation site" description="N-linked (GlcNAc...) asparagine" evidence="2">
    <location>
        <position position="138"/>
    </location>
</feature>
<feature type="glycosylation site" description="N-linked (GlcNAc...) asparagine" evidence="2">
    <location>
        <position position="267"/>
    </location>
</feature>
<feature type="glycosylation site" description="N-linked (GlcNAc...) asparagine" evidence="2">
    <location>
        <position position="335"/>
    </location>
</feature>
<feature type="glycosylation site" description="N-linked (GlcNAc...) asparagine" evidence="2">
    <location>
        <position position="481"/>
    </location>
</feature>
<feature type="glycosylation site" description="N-linked (GlcNAc...) asparagine" evidence="3">
    <location>
        <position position="512"/>
    </location>
</feature>
<feature type="disulfide bond" evidence="1">
    <location>
        <begin position="474"/>
        <end position="477"/>
    </location>
</feature>
<feature type="disulfide bond" evidence="1">
    <location>
        <begin position="482"/>
        <end position="500"/>
    </location>
</feature>
<feature type="disulfide bond" evidence="1">
    <location>
        <begin position="689"/>
        <end position="794"/>
    </location>
</feature>
<feature type="splice variant" id="VSP_020298" description="In isoform a." evidence="5">
    <location>
        <begin position="151"/>
        <end position="170"/>
    </location>
</feature>
<sequence>MTAEADLLEGYDEELGGNESQKRDCKGITTAIVVVLLILVMIFAALVFFTPLFAAKSFGSWRLNVSDLRSLRYPYAEFAFTDNNAVVMQSWEGVEIVEDGVSRLIFGRENGAEITPSADRKYFAMMDHAPNPGMNPQNETFHLKIVNNNERLNPLLPFEVEELFRELSDSRITYDIGLRKEESVIQAFKWNGKFNDFVFVESNKIYYQSSPEEEGLTRVSNGGEHTVDGLFDWIYEEEIFGRKDAMWWSTKGDQLAYASYDNHLTKNVSLKTYHRLEPYPIDTNFHYPKTFAKVLPTYTLSIWNKKTEQSRQLDVQLKDSLSYHYLLAVKWLEINGTEQLVSVWTNRYQNEVALTICDWDTAICRLEFEYKYASKRWVTHDDFHSITSFEDTLFFLLPHDKRDNAFQQVASLRLSHGQLRTPKFLNLGEYDVTSINGINKETRTIFFHAAAPKPSHRSLFSYSLADESRNSAYCISCSIKNCTWAQAQMDDQMKTAIVSCKGPAAPHTAIVNLTRMDSDKKTEHANLLYDKTYQNRVEEAGLPVIIKETIKISDDFDALIKLSIPKDIYNRDKHQAIPLIVHVYGGPNDQNTKEATQIGIEEVVASASQAAILRIDGRGSGGRGWKYRSAIYGQLGTVEVEDQIKAIKVVLRLYRHLLDARRVAVFGWSYGGFMTLSMVNEAPEQFFKCAVSVAPVTNFAYYDATYTERYMGDAPLESYSDVTKKLDNFKSTRLLLMHGLLDDNVHFQNSAILIDELQNRGVDFDLMVYPNQAHSLSSRTSHVVGKMTHFLRQCFYTDK</sequence>
<gene>
    <name type="primary">dpf-1</name>
    <name type="ORF">T23F1.7</name>
</gene>
<name>DPF1_CAEEL</name>
<reference key="1">
    <citation type="journal article" date="1998" name="Science">
        <title>Genome sequence of the nematode C. elegans: a platform for investigating biology.</title>
        <authorList>
            <consortium name="The C. elegans sequencing consortium"/>
        </authorList>
    </citation>
    <scope>NUCLEOTIDE SEQUENCE [LARGE SCALE GENOMIC DNA]</scope>
    <scope>ALTERNATIVE SPLICING</scope>
    <source>
        <strain>Bristol N2</strain>
    </source>
</reference>
<reference key="2">
    <citation type="book" date="2005" name="Proceedings of the 15th international C. elegans meeting">
        <title>Dipeptidyl peptidase IV-like protease family is essential for control of distal tip cell migration in C. elegans.</title>
        <authorList>
            <person name="Yoshina S."/>
            <person name="Gengyo-Ando K."/>
            <person name="Mitani S."/>
            <person name="Iino Y."/>
            <person name="Inoue H."/>
            <person name="Takahashi K."/>
        </authorList>
    </citation>
    <scope>FUNCTION</scope>
</reference>
<reference key="3">
    <citation type="journal article" date="2007" name="Mol. Cell. Proteomics">
        <title>Proteomics reveals N-linked glycoprotein diversity in Caenorhabditis elegans and suggests an atypical translocation mechanism for integral membrane proteins.</title>
        <authorList>
            <person name="Kaji H."/>
            <person name="Kamiie J."/>
            <person name="Kawakami H."/>
            <person name="Kido K."/>
            <person name="Yamauchi Y."/>
            <person name="Shinkawa T."/>
            <person name="Taoka M."/>
            <person name="Takahashi N."/>
            <person name="Isobe T."/>
        </authorList>
    </citation>
    <scope>GLYCOSYLATION [LARGE SCALE ANALYSIS] AT ASN-512</scope>
    <scope>IDENTIFICATION BY MASS SPECTROMETRY</scope>
    <source>
        <strain>Bristol N2</strain>
    </source>
</reference>
<evidence type="ECO:0000250" key="1"/>
<evidence type="ECO:0000255" key="2"/>
<evidence type="ECO:0000269" key="3">
    <source>
    </source>
</evidence>
<evidence type="ECO:0000269" key="4">
    <source ref="2"/>
</evidence>
<evidence type="ECO:0000305" key="5"/>